<name>ICCE_TALVA</name>
<evidence type="ECO:0000250" key="1">
    <source>
        <dbReference type="UniProtKB" id="P54550"/>
    </source>
</evidence>
<evidence type="ECO:0000269" key="2">
    <source>
    </source>
</evidence>
<evidence type="ECO:0000303" key="3">
    <source>
    </source>
</evidence>
<evidence type="ECO:0000305" key="4"/>
<evidence type="ECO:0000305" key="5">
    <source>
    </source>
</evidence>
<keyword id="KW-0285">Flavoprotein</keyword>
<keyword id="KW-0288">FMN</keyword>
<keyword id="KW-0521">NADP</keyword>
<keyword id="KW-0560">Oxidoreductase</keyword>
<reference key="1">
    <citation type="journal article" date="2019" name="J. Am. Chem. Soc.">
        <title>Enzyme-catalyzed inverse-electron demand Diels-Alder reaction in the biosynthesis of antifungal ilicicolin H.</title>
        <authorList>
            <person name="Zhang Z."/>
            <person name="Jamieson C.S."/>
            <person name="Zhao Y.L."/>
            <person name="Li D."/>
            <person name="Ohashi M."/>
            <person name="Houk K.N."/>
            <person name="Tang Y."/>
        </authorList>
    </citation>
    <scope>NUCLEOTIDE SEQUENCE [GENOMIC DNA]</scope>
    <scope>FUNCTION</scope>
    <scope>CATALYTIC ACTIVITY</scope>
    <scope>PATHWAY</scope>
    <source>
        <strain>HXQ-H-1</strain>
    </source>
</reference>
<proteinExistence type="evidence at protein level"/>
<dbReference type="EC" id="1.-.-.-" evidence="2"/>
<dbReference type="EMBL" id="MK539848">
    <property type="protein sequence ID" value="QBQ83707.1"/>
    <property type="molecule type" value="Genomic_DNA"/>
</dbReference>
<dbReference type="SMR" id="A0A482N8M8"/>
<dbReference type="GO" id="GO:0010181">
    <property type="term" value="F:FMN binding"/>
    <property type="evidence" value="ECO:0007669"/>
    <property type="project" value="InterPro"/>
</dbReference>
<dbReference type="GO" id="GO:0016491">
    <property type="term" value="F:oxidoreductase activity"/>
    <property type="evidence" value="ECO:0007669"/>
    <property type="project" value="UniProtKB-KW"/>
</dbReference>
<dbReference type="GO" id="GO:0016218">
    <property type="term" value="F:polyketide synthase activity"/>
    <property type="evidence" value="ECO:0000314"/>
    <property type="project" value="UniProt"/>
</dbReference>
<dbReference type="GO" id="GO:0016854">
    <property type="term" value="F:racemase and epimerase activity"/>
    <property type="evidence" value="ECO:0000314"/>
    <property type="project" value="UniProt"/>
</dbReference>
<dbReference type="GO" id="GO:0140781">
    <property type="term" value="P:ilicicolin H biosynthetic process"/>
    <property type="evidence" value="ECO:0000314"/>
    <property type="project" value="GO_Central"/>
</dbReference>
<dbReference type="Gene3D" id="3.20.20.70">
    <property type="entry name" value="Aldolase class I"/>
    <property type="match status" value="1"/>
</dbReference>
<dbReference type="InterPro" id="IPR013785">
    <property type="entry name" value="Aldolase_TIM"/>
</dbReference>
<dbReference type="InterPro" id="IPR051799">
    <property type="entry name" value="NADH_flavin_oxidoreductase"/>
</dbReference>
<dbReference type="InterPro" id="IPR001155">
    <property type="entry name" value="OxRdtase_FMN_N"/>
</dbReference>
<dbReference type="PANTHER" id="PTHR43656">
    <property type="entry name" value="BINDING OXIDOREDUCTASE, PUTATIVE (AFU_ORTHOLOGUE AFUA_2G08260)-RELATED"/>
    <property type="match status" value="1"/>
</dbReference>
<dbReference type="PANTHER" id="PTHR43656:SF2">
    <property type="entry name" value="BINDING OXIDOREDUCTASE, PUTATIVE (AFU_ORTHOLOGUE AFUA_2G08260)-RELATED"/>
    <property type="match status" value="1"/>
</dbReference>
<dbReference type="Pfam" id="PF00724">
    <property type="entry name" value="Oxidored_FMN"/>
    <property type="match status" value="1"/>
</dbReference>
<dbReference type="SUPFAM" id="SSF51395">
    <property type="entry name" value="FMN-linked oxidoreductases"/>
    <property type="match status" value="1"/>
</dbReference>
<gene>
    <name evidence="3" type="primary">iccE</name>
</gene>
<feature type="chain" id="PRO_0000449009" description="NADH-dependent flavin oxidoreductase iccE">
    <location>
        <begin position="1"/>
        <end position="414"/>
    </location>
</feature>
<feature type="binding site" evidence="1">
    <location>
        <begin position="25"/>
        <end position="28"/>
    </location>
    <ligand>
        <name>FMN</name>
        <dbReference type="ChEBI" id="CHEBI:58210"/>
    </ligand>
</feature>
<feature type="binding site" evidence="1">
    <location>
        <position position="107"/>
    </location>
    <ligand>
        <name>FMN</name>
        <dbReference type="ChEBI" id="CHEBI:58210"/>
    </ligand>
</feature>
<feature type="binding site" evidence="1">
    <location>
        <begin position="188"/>
        <end position="191"/>
    </location>
    <ligand>
        <name>substrate</name>
    </ligand>
</feature>
<feature type="binding site" evidence="1">
    <location>
        <begin position="347"/>
        <end position="348"/>
    </location>
    <ligand>
        <name>FMN</name>
        <dbReference type="ChEBI" id="CHEBI:58210"/>
    </ligand>
</feature>
<accession>A0A482N8M8</accession>
<organism>
    <name type="scientific">Talaromyces variabilis</name>
    <name type="common">Penicillium variabile</name>
    <dbReference type="NCBI Taxonomy" id="28576"/>
    <lineage>
        <taxon>Eukaryota</taxon>
        <taxon>Fungi</taxon>
        <taxon>Dikarya</taxon>
        <taxon>Ascomycota</taxon>
        <taxon>Pezizomycotina</taxon>
        <taxon>Eurotiomycetes</taxon>
        <taxon>Eurotiomycetidae</taxon>
        <taxon>Eurotiales</taxon>
        <taxon>Trichocomaceae</taxon>
        <taxon>Talaromyces</taxon>
    </lineage>
</organism>
<comment type="function">
    <text evidence="2 5">NADH-dependent flavin oxidoreductase; part of the gene cluster that mediates the biosynthesis of ilicicolin H, a 4-hydroxy-2-pyridonealkaloid that has potent and broad antifungal activities by inhibiting the mitochondrial respiration chain (PubMed:30905148). IccE acts as an epimerase and catalyzes the conversion of 8-epi-ilicicolin H into the final product ilicicolin H (PubMed:30905148). The biosynthesis of ilicicolin H starts with formation of the tetramic acid by the hybrid PKS-NRPS synthetase iccA with the partnering trans-enoyl reductase iccB since iccA lacks a designated enoylreductase (ER) domain. The cytochrome P450 monooxygenase iccC then catalyzes the ring expansion of the tetramate to the acyclic 2-pyridone. The pericyclase iccD further converts the acyclic 2-pyridone into 8-epi-ilicicolin H. Finally, the epimerase iccE converts 8-epi-ilicicolin H into ilicicolin H via epimerization. IccA to iccE are sufficient for ilicicolin H biosynthesis and the roles of the remaining enzymes, iccF, iccG and iccH within the pathway have still to be determined (Probable) (PubMed:30905148).</text>
</comment>
<comment type="catalytic activity">
    <reaction evidence="2">
        <text>8-epi-ilicicolin H = ilicicolin H</text>
        <dbReference type="Rhea" id="RHEA:64564"/>
        <dbReference type="ChEBI" id="CHEBI:77772"/>
        <dbReference type="ChEBI" id="CHEBI:155888"/>
    </reaction>
    <physiologicalReaction direction="left-to-right" evidence="2">
        <dbReference type="Rhea" id="RHEA:64565"/>
    </physiologicalReaction>
</comment>
<comment type="pathway">
    <text evidence="2">Mycotoxin biosynthesis.</text>
</comment>
<comment type="similarity">
    <text evidence="4">Belongs to the NADH:flavin oxidoreductase/NADH oxidase family.</text>
</comment>
<protein>
    <recommendedName>
        <fullName evidence="3">NADH-dependent flavin oxidoreductase iccE</fullName>
        <ecNumber evidence="2">1.-.-.-</ecNumber>
    </recommendedName>
    <alternativeName>
        <fullName evidence="3">Epimerase iliE</fullName>
    </alternativeName>
    <alternativeName>
        <fullName evidence="3">Ilicicolin H biosynthesis cluster protein E</fullName>
    </alternativeName>
</protein>
<sequence length="414" mass="44593">MADLHLAKSITLRCGLTLPNRLAKTAIAESIAPRNMLIDEGFHRVYAPWAEGGWGMVLTGHVQVDSMHLGTHTDPAVNADFSDDQIVGSWKVWAAVCNRHGTPTIMQLNHPGRQAPIGAGTSGVFAKNISASAVPMDIGSGLLARAVSKIVFGTPREMTVDDIGKLVRQFARAARLASQSGFAGVELHASHGYLLAQFLSAATNRRKDAYGGTPANRARIVVEIIKAVRAEVPASFCVGIILTAVHGSASTEEFQSFIEQAQLICDAGVDFIEISGGTFETPSMFIGPEKRGKAYDWDNQEAFFLDFAQAIRPHLGTVPLLLTGGFRSCHAMEAAVKRGDCDMIGLARPAVVNPLLPKTVVFNPEVNKSGDTKLHATRTPAPWYIKLFGITALNVHMDNAWYVGRLQTLAKTGR</sequence>